<feature type="chain" id="PRO_0000098648" description="5-methyltetrahydropteroyltriglutamate--homocysteine methyltransferase">
    <location>
        <begin position="1"/>
        <end position="766"/>
    </location>
</feature>
<feature type="active site" description="Proton donor" evidence="1">
    <location>
        <position position="701"/>
    </location>
</feature>
<feature type="binding site" evidence="1">
    <location>
        <begin position="23"/>
        <end position="26"/>
    </location>
    <ligand>
        <name>5-methyltetrahydropteroyltri-L-glutamate</name>
        <dbReference type="ChEBI" id="CHEBI:58207"/>
    </ligand>
</feature>
<feature type="binding site" evidence="1">
    <location>
        <position position="121"/>
    </location>
    <ligand>
        <name>5-methyltetrahydropteroyltri-L-glutamate</name>
        <dbReference type="ChEBI" id="CHEBI:58207"/>
    </ligand>
</feature>
<feature type="binding site" evidence="1">
    <location>
        <begin position="438"/>
        <end position="440"/>
    </location>
    <ligand>
        <name>L-homocysteine</name>
        <dbReference type="ChEBI" id="CHEBI:58199"/>
    </ligand>
</feature>
<feature type="binding site" evidence="1">
    <location>
        <begin position="438"/>
        <end position="440"/>
    </location>
    <ligand>
        <name>L-methionine</name>
        <dbReference type="ChEBI" id="CHEBI:57844"/>
    </ligand>
</feature>
<feature type="binding site" evidence="1">
    <location>
        <position position="491"/>
    </location>
    <ligand>
        <name>L-homocysteine</name>
        <dbReference type="ChEBI" id="CHEBI:58199"/>
    </ligand>
</feature>
<feature type="binding site" evidence="1">
    <location>
        <position position="491"/>
    </location>
    <ligand>
        <name>L-methionine</name>
        <dbReference type="ChEBI" id="CHEBI:57844"/>
    </ligand>
</feature>
<feature type="binding site" evidence="1">
    <location>
        <begin position="522"/>
        <end position="523"/>
    </location>
    <ligand>
        <name>5-methyltetrahydropteroyltri-L-glutamate</name>
        <dbReference type="ChEBI" id="CHEBI:58207"/>
    </ligand>
</feature>
<feature type="binding site" evidence="1">
    <location>
        <position position="568"/>
    </location>
    <ligand>
        <name>5-methyltetrahydropteroyltri-L-glutamate</name>
        <dbReference type="ChEBI" id="CHEBI:58207"/>
    </ligand>
</feature>
<feature type="binding site" evidence="1">
    <location>
        <position position="606"/>
    </location>
    <ligand>
        <name>L-homocysteine</name>
        <dbReference type="ChEBI" id="CHEBI:58199"/>
    </ligand>
</feature>
<feature type="binding site" evidence="1">
    <location>
        <position position="606"/>
    </location>
    <ligand>
        <name>L-methionine</name>
        <dbReference type="ChEBI" id="CHEBI:57844"/>
    </ligand>
</feature>
<feature type="binding site" evidence="1">
    <location>
        <position position="612"/>
    </location>
    <ligand>
        <name>5-methyltetrahydropteroyltri-L-glutamate</name>
        <dbReference type="ChEBI" id="CHEBI:58207"/>
    </ligand>
</feature>
<feature type="binding site" evidence="1">
    <location>
        <position position="648"/>
    </location>
    <ligand>
        <name>Zn(2+)</name>
        <dbReference type="ChEBI" id="CHEBI:29105"/>
        <note>catalytic</note>
    </ligand>
</feature>
<feature type="binding site" evidence="1">
    <location>
        <position position="650"/>
    </location>
    <ligand>
        <name>Zn(2+)</name>
        <dbReference type="ChEBI" id="CHEBI:29105"/>
        <note>catalytic</note>
    </ligand>
</feature>
<feature type="binding site" evidence="1">
    <location>
        <position position="672"/>
    </location>
    <ligand>
        <name>Zn(2+)</name>
        <dbReference type="ChEBI" id="CHEBI:29105"/>
        <note>catalytic</note>
    </ligand>
</feature>
<feature type="binding site" evidence="1">
    <location>
        <position position="733"/>
    </location>
    <ligand>
        <name>Zn(2+)</name>
        <dbReference type="ChEBI" id="CHEBI:29105"/>
        <note>catalytic</note>
    </ligand>
</feature>
<organism>
    <name type="scientific">Photobacterium profundum (strain SS9)</name>
    <dbReference type="NCBI Taxonomy" id="298386"/>
    <lineage>
        <taxon>Bacteria</taxon>
        <taxon>Pseudomonadati</taxon>
        <taxon>Pseudomonadota</taxon>
        <taxon>Gammaproteobacteria</taxon>
        <taxon>Vibrionales</taxon>
        <taxon>Vibrionaceae</taxon>
        <taxon>Photobacterium</taxon>
    </lineage>
</organism>
<dbReference type="EC" id="2.1.1.14" evidence="1"/>
<dbReference type="EMBL" id="CR378667">
    <property type="protein sequence ID" value="CAG19790.1"/>
    <property type="molecule type" value="Genomic_DNA"/>
</dbReference>
<dbReference type="RefSeq" id="WP_011218114.1">
    <property type="nucleotide sequence ID" value="NC_006370.1"/>
</dbReference>
<dbReference type="SMR" id="Q6LSD6"/>
<dbReference type="STRING" id="298386.PBPRA1379"/>
<dbReference type="KEGG" id="ppr:PBPRA1379"/>
<dbReference type="eggNOG" id="COG0620">
    <property type="taxonomic scope" value="Bacteria"/>
</dbReference>
<dbReference type="HOGENOM" id="CLU_013175_0_0_6"/>
<dbReference type="UniPathway" id="UPA00051">
    <property type="reaction ID" value="UER00082"/>
</dbReference>
<dbReference type="Proteomes" id="UP000000593">
    <property type="component" value="Chromosome 1"/>
</dbReference>
<dbReference type="GO" id="GO:0003871">
    <property type="term" value="F:5-methyltetrahydropteroyltriglutamate-homocysteine S-methyltransferase activity"/>
    <property type="evidence" value="ECO:0007669"/>
    <property type="project" value="UniProtKB-UniRule"/>
</dbReference>
<dbReference type="GO" id="GO:0008270">
    <property type="term" value="F:zinc ion binding"/>
    <property type="evidence" value="ECO:0007669"/>
    <property type="project" value="InterPro"/>
</dbReference>
<dbReference type="GO" id="GO:0009086">
    <property type="term" value="P:methionine biosynthetic process"/>
    <property type="evidence" value="ECO:0007669"/>
    <property type="project" value="UniProtKB-UniRule"/>
</dbReference>
<dbReference type="GO" id="GO:0032259">
    <property type="term" value="P:methylation"/>
    <property type="evidence" value="ECO:0007669"/>
    <property type="project" value="UniProtKB-KW"/>
</dbReference>
<dbReference type="CDD" id="cd03311">
    <property type="entry name" value="CIMS_C_terminal_like"/>
    <property type="match status" value="1"/>
</dbReference>
<dbReference type="CDD" id="cd03312">
    <property type="entry name" value="CIMS_N_terminal_like"/>
    <property type="match status" value="1"/>
</dbReference>
<dbReference type="FunFam" id="3.20.20.210:FF:000002">
    <property type="entry name" value="5-methyltetrahydropteroyltriglutamate--homocysteine methyltransferase"/>
    <property type="match status" value="1"/>
</dbReference>
<dbReference type="FunFam" id="3.20.20.210:FF:000003">
    <property type="entry name" value="5-methyltetrahydropteroyltriglutamate--homocysteine methyltransferase"/>
    <property type="match status" value="1"/>
</dbReference>
<dbReference type="Gene3D" id="3.20.20.210">
    <property type="match status" value="2"/>
</dbReference>
<dbReference type="HAMAP" id="MF_00172">
    <property type="entry name" value="Meth_synth"/>
    <property type="match status" value="1"/>
</dbReference>
<dbReference type="InterPro" id="IPR013215">
    <property type="entry name" value="Cbl-indep_Met_Synth_N"/>
</dbReference>
<dbReference type="InterPro" id="IPR006276">
    <property type="entry name" value="Cobalamin-indep_Met_synthase"/>
</dbReference>
<dbReference type="InterPro" id="IPR002629">
    <property type="entry name" value="Met_Synth_C/arc"/>
</dbReference>
<dbReference type="InterPro" id="IPR038071">
    <property type="entry name" value="UROD/MetE-like_sf"/>
</dbReference>
<dbReference type="NCBIfam" id="TIGR01371">
    <property type="entry name" value="met_syn_B12ind"/>
    <property type="match status" value="1"/>
</dbReference>
<dbReference type="NCBIfam" id="NF003556">
    <property type="entry name" value="PRK05222.1"/>
    <property type="match status" value="1"/>
</dbReference>
<dbReference type="PANTHER" id="PTHR30519">
    <property type="entry name" value="5-METHYLTETRAHYDROPTEROYLTRIGLUTAMATE--HOMOCYSTEINE METHYLTRANSFERASE"/>
    <property type="match status" value="1"/>
</dbReference>
<dbReference type="Pfam" id="PF08267">
    <property type="entry name" value="Meth_synt_1"/>
    <property type="match status" value="1"/>
</dbReference>
<dbReference type="Pfam" id="PF01717">
    <property type="entry name" value="Meth_synt_2"/>
    <property type="match status" value="1"/>
</dbReference>
<dbReference type="PIRSF" id="PIRSF000382">
    <property type="entry name" value="MeTrfase_B12_ind"/>
    <property type="match status" value="1"/>
</dbReference>
<dbReference type="SUPFAM" id="SSF51726">
    <property type="entry name" value="UROD/MetE-like"/>
    <property type="match status" value="2"/>
</dbReference>
<protein>
    <recommendedName>
        <fullName evidence="1">5-methyltetrahydropteroyltriglutamate--homocysteine methyltransferase</fullName>
        <ecNumber evidence="1">2.1.1.14</ecNumber>
    </recommendedName>
    <alternativeName>
        <fullName evidence="1">Cobalamin-independent methionine synthase</fullName>
    </alternativeName>
    <alternativeName>
        <fullName evidence="1">Methionine synthase, vitamin-B12 independent isozyme</fullName>
    </alternativeName>
</protein>
<keyword id="KW-0028">Amino-acid biosynthesis</keyword>
<keyword id="KW-0479">Metal-binding</keyword>
<keyword id="KW-0486">Methionine biosynthesis</keyword>
<keyword id="KW-0489">Methyltransferase</keyword>
<keyword id="KW-1185">Reference proteome</keyword>
<keyword id="KW-0677">Repeat</keyword>
<keyword id="KW-0808">Transferase</keyword>
<keyword id="KW-0862">Zinc</keyword>
<accession>Q6LSD6</accession>
<sequence length="766" mass="86325">MTITTENKTVTHILGYPRVGSQRELKFAQEKYWRGEIEQNELKEVGSLLRHRHWGDQVGAGLDYVSVGDFAWYDHVLNTSMLLGHIPKRHDNGFPDLDTLFRIARGKAPTGCSCAASDMTKWFNTNYHYIVPEFTEDDQFNVSWQQLFGEVAEAKKAGHKVKPVLLGPVSYLWLGKEKEEGFDRLSLLPRLLAAYQKILSKLEALGVEWVQIDEPVLALELPKPWAESFKLAYQVLNGNTKLLLTTYFDNITHHLDKIVELNIDGLHVDLSAAPEQLNAVVDALPENWVLSAGVVNGRNVWRADLSHVLDVLQPVKAKLGQRLWVGSSCSLLHSPIDLDLETDLSPEVRQWLSFAKQKCREFLVAQALDGNAIAIQECAKYSAPIKARATSALVNNPDVRQRTNAITAALAERTAPYAERTRQQRAALNLPLLPTTTIGSFPQTNEIRTQRRDFKAGYLTEADYNTALKGHIADAIQRQEDLDLDVFVHGEAERNDMVEYFAELLEGFAVTRFGWVQSYGSRCVKPAVIVSDIYRAKPMTVEWTTYAQSLTDKLVKGMLTGPVTILGWTFPREDLPRQGIANQIALALRDEVSDLQAAGIKIIQIDEPAIREGLPLKESQWQAYLDWAVNAFKISAASAEPQTQIHTHMCYSEFNHIIKSVAALDADVITIETSRSDMELLKAFEEFDYPNEIGPGVYDIHSPNIPSIEQIVHLVEKAETLIPIERLWINPDCGLKTRNWEETEAALRSMVEATKKLREQWQEKAV</sequence>
<proteinExistence type="inferred from homology"/>
<name>METE_PHOPR</name>
<evidence type="ECO:0000255" key="1">
    <source>
        <dbReference type="HAMAP-Rule" id="MF_00172"/>
    </source>
</evidence>
<gene>
    <name evidence="1" type="primary">metE</name>
    <name type="ordered locus">PBPRA1379</name>
</gene>
<comment type="function">
    <text evidence="1">Catalyzes the transfer of a methyl group from 5-methyltetrahydrofolate to homocysteine resulting in methionine formation.</text>
</comment>
<comment type="catalytic activity">
    <reaction evidence="1">
        <text>5-methyltetrahydropteroyltri-L-glutamate + L-homocysteine = tetrahydropteroyltri-L-glutamate + L-methionine</text>
        <dbReference type="Rhea" id="RHEA:21196"/>
        <dbReference type="ChEBI" id="CHEBI:57844"/>
        <dbReference type="ChEBI" id="CHEBI:58140"/>
        <dbReference type="ChEBI" id="CHEBI:58199"/>
        <dbReference type="ChEBI" id="CHEBI:58207"/>
        <dbReference type="EC" id="2.1.1.14"/>
    </reaction>
</comment>
<comment type="cofactor">
    <cofactor evidence="1">
        <name>Zn(2+)</name>
        <dbReference type="ChEBI" id="CHEBI:29105"/>
    </cofactor>
    <text evidence="1">Binds 1 zinc ion per subunit.</text>
</comment>
<comment type="pathway">
    <text evidence="1">Amino-acid biosynthesis; L-methionine biosynthesis via de novo pathway; L-methionine from L-homocysteine (MetE route): step 1/1.</text>
</comment>
<comment type="similarity">
    <text evidence="1">Belongs to the vitamin-B12 independent methionine synthase family.</text>
</comment>
<reference key="1">
    <citation type="journal article" date="2005" name="Science">
        <title>Life at depth: Photobacterium profundum genome sequence and expression analysis.</title>
        <authorList>
            <person name="Vezzi A."/>
            <person name="Campanaro S."/>
            <person name="D'Angelo M."/>
            <person name="Simonato F."/>
            <person name="Vitulo N."/>
            <person name="Lauro F.M."/>
            <person name="Cestaro A."/>
            <person name="Malacrida G."/>
            <person name="Simionati B."/>
            <person name="Cannata N."/>
            <person name="Romualdi C."/>
            <person name="Bartlett D.H."/>
            <person name="Valle G."/>
        </authorList>
    </citation>
    <scope>NUCLEOTIDE SEQUENCE [LARGE SCALE GENOMIC DNA]</scope>
    <source>
        <strain>ATCC BAA-1253 / SS9</strain>
    </source>
</reference>